<accession>Q5SH23</accession>
<accession>Q84BR0</accession>
<evidence type="ECO:0000250" key="1"/>
<evidence type="ECO:0000255" key="2">
    <source>
        <dbReference type="PROSITE-ProRule" id="PRU00409"/>
    </source>
</evidence>
<evidence type="ECO:0000269" key="3">
    <source>
    </source>
</evidence>
<evidence type="ECO:0000269" key="4">
    <source>
    </source>
</evidence>
<evidence type="ECO:0000269" key="5">
    <source>
    </source>
</evidence>
<evidence type="ECO:0000305" key="6"/>
<evidence type="ECO:0007829" key="7">
    <source>
        <dbReference type="PDB" id="3VPD"/>
    </source>
</evidence>
<sequence>MLAILYDRIRPDERMLFERAEALGLPYKKVYVPALPMVLGERPKELEGVTVALERCVSQSRGLAAARYLTALGIPVVNRPEVIEACGDKWATSVALAKAGLPQPKTALATDREEALRLMEAFGYPVVLKPVIGSWGRLLAKVTDRAAAEALLEHKEVLGGFQHQLFYIQEYVEKPGRDIRVFVVGERAIAAIYRRSAHWITNTARGGQAENCPLTEEVARLSVKAAEAVGGGVVAVDLFESERGLLVNEVNHTMEFKNSVHTTGVDIPGEILKYAWSLAS</sequence>
<dbReference type="EC" id="6.3.2.43" evidence="4"/>
<dbReference type="EMBL" id="AB103032">
    <property type="protein sequence ID" value="BAC67243.1"/>
    <property type="molecule type" value="Genomic_DNA"/>
</dbReference>
<dbReference type="EMBL" id="AP008226">
    <property type="protein sequence ID" value="BAD71730.1"/>
    <property type="molecule type" value="Genomic_DNA"/>
</dbReference>
<dbReference type="RefSeq" id="WP_011229004.1">
    <property type="nucleotide sequence ID" value="NC_006461.1"/>
</dbReference>
<dbReference type="RefSeq" id="YP_145173.1">
    <property type="nucleotide sequence ID" value="NC_006461.1"/>
</dbReference>
<dbReference type="PDB" id="1UC8">
    <property type="method" value="X-ray"/>
    <property type="resolution" value="2.00 A"/>
    <property type="chains" value="A/B=1-280"/>
</dbReference>
<dbReference type="PDB" id="1UC9">
    <property type="method" value="X-ray"/>
    <property type="resolution" value="2.38 A"/>
    <property type="chains" value="A/B=1-280"/>
</dbReference>
<dbReference type="PDB" id="3VPD">
    <property type="method" value="X-ray"/>
    <property type="resolution" value="1.95 A"/>
    <property type="chains" value="A/B=1-279"/>
</dbReference>
<dbReference type="PDBsum" id="1UC8"/>
<dbReference type="PDBsum" id="1UC9"/>
<dbReference type="PDBsum" id="3VPD"/>
<dbReference type="SMR" id="Q5SH23"/>
<dbReference type="DIP" id="DIP-61749N"/>
<dbReference type="EnsemblBacteria" id="BAD71730">
    <property type="protein sequence ID" value="BAD71730"/>
    <property type="gene ID" value="BAD71730"/>
</dbReference>
<dbReference type="GeneID" id="3167971"/>
<dbReference type="KEGG" id="ttj:TTHA1907"/>
<dbReference type="PATRIC" id="fig|300852.9.peg.1875"/>
<dbReference type="eggNOG" id="COG0189">
    <property type="taxonomic scope" value="Bacteria"/>
</dbReference>
<dbReference type="HOGENOM" id="CLU_054353_2_1_0"/>
<dbReference type="PhylomeDB" id="Q5SH23"/>
<dbReference type="BioCyc" id="MetaCyc:MONOMER-6728"/>
<dbReference type="BRENDA" id="6.3.2.43">
    <property type="organism ID" value="2305"/>
</dbReference>
<dbReference type="SABIO-RK" id="Q5SH23"/>
<dbReference type="UniPathway" id="UPA00033">
    <property type="reaction ID" value="UER00035"/>
</dbReference>
<dbReference type="EvolutionaryTrace" id="Q5SH23"/>
<dbReference type="Proteomes" id="UP000000532">
    <property type="component" value="Chromosome"/>
</dbReference>
<dbReference type="GO" id="GO:0005737">
    <property type="term" value="C:cytoplasm"/>
    <property type="evidence" value="ECO:0007669"/>
    <property type="project" value="TreeGrafter"/>
</dbReference>
<dbReference type="GO" id="GO:0005524">
    <property type="term" value="F:ATP binding"/>
    <property type="evidence" value="ECO:0007669"/>
    <property type="project" value="UniProtKB-KW"/>
</dbReference>
<dbReference type="GO" id="GO:0046872">
    <property type="term" value="F:metal ion binding"/>
    <property type="evidence" value="ECO:0007669"/>
    <property type="project" value="UniProtKB-KW"/>
</dbReference>
<dbReference type="GO" id="GO:0018169">
    <property type="term" value="F:ribosomal S6-glutamic acid ligase activity"/>
    <property type="evidence" value="ECO:0007669"/>
    <property type="project" value="TreeGrafter"/>
</dbReference>
<dbReference type="GO" id="GO:0019878">
    <property type="term" value="P:lysine biosynthetic process via aminoadipic acid"/>
    <property type="evidence" value="ECO:0007669"/>
    <property type="project" value="UniProtKB-UniPathway"/>
</dbReference>
<dbReference type="GO" id="GO:0036211">
    <property type="term" value="P:protein modification process"/>
    <property type="evidence" value="ECO:0007669"/>
    <property type="project" value="InterPro"/>
</dbReference>
<dbReference type="GO" id="GO:0009432">
    <property type="term" value="P:SOS response"/>
    <property type="evidence" value="ECO:0007669"/>
    <property type="project" value="TreeGrafter"/>
</dbReference>
<dbReference type="FunFam" id="3.30.1490.20:FF:000025">
    <property type="entry name" value="Alpha-aminoadipate--LysW ligase LysX protein"/>
    <property type="match status" value="1"/>
</dbReference>
<dbReference type="FunFam" id="3.30.470.20:FF:000058">
    <property type="entry name" value="Alpha-aminoadipate--LysW ligase LysX protein"/>
    <property type="match status" value="1"/>
</dbReference>
<dbReference type="Gene3D" id="3.40.50.20">
    <property type="match status" value="1"/>
</dbReference>
<dbReference type="Gene3D" id="3.30.1490.20">
    <property type="entry name" value="ATP-grasp fold, A domain"/>
    <property type="match status" value="1"/>
</dbReference>
<dbReference type="Gene3D" id="3.30.470.20">
    <property type="entry name" value="ATP-grasp fold, B domain"/>
    <property type="match status" value="1"/>
</dbReference>
<dbReference type="InterPro" id="IPR011761">
    <property type="entry name" value="ATP-grasp"/>
</dbReference>
<dbReference type="InterPro" id="IPR013651">
    <property type="entry name" value="ATP-grasp_RimK-type"/>
</dbReference>
<dbReference type="InterPro" id="IPR013815">
    <property type="entry name" value="ATP_grasp_subdomain_1"/>
</dbReference>
<dbReference type="InterPro" id="IPR054562">
    <property type="entry name" value="LysX/ArgX_preATP_grasp"/>
</dbReference>
<dbReference type="InterPro" id="IPR011870">
    <property type="entry name" value="LysX_arch"/>
</dbReference>
<dbReference type="InterPro" id="IPR016185">
    <property type="entry name" value="PreATP-grasp_dom_sf"/>
</dbReference>
<dbReference type="InterPro" id="IPR004666">
    <property type="entry name" value="Rp_bS6_RimK/Lys_biosynth_LsyX"/>
</dbReference>
<dbReference type="NCBIfam" id="TIGR02144">
    <property type="entry name" value="LysX_arch"/>
    <property type="match status" value="1"/>
</dbReference>
<dbReference type="NCBIfam" id="TIGR00768">
    <property type="entry name" value="rimK_fam"/>
    <property type="match status" value="1"/>
</dbReference>
<dbReference type="PANTHER" id="PTHR21621:SF0">
    <property type="entry name" value="BETA-CITRYLGLUTAMATE SYNTHASE B-RELATED"/>
    <property type="match status" value="1"/>
</dbReference>
<dbReference type="PANTHER" id="PTHR21621">
    <property type="entry name" value="RIBOSOMAL PROTEIN S6 MODIFICATION PROTEIN"/>
    <property type="match status" value="1"/>
</dbReference>
<dbReference type="Pfam" id="PF22626">
    <property type="entry name" value="LysX_preATP_grasp"/>
    <property type="match status" value="1"/>
</dbReference>
<dbReference type="Pfam" id="PF08443">
    <property type="entry name" value="RimK"/>
    <property type="match status" value="1"/>
</dbReference>
<dbReference type="SUPFAM" id="SSF56059">
    <property type="entry name" value="Glutathione synthetase ATP-binding domain-like"/>
    <property type="match status" value="1"/>
</dbReference>
<dbReference type="SUPFAM" id="SSF52440">
    <property type="entry name" value="PreATP-grasp domain"/>
    <property type="match status" value="1"/>
</dbReference>
<dbReference type="PROSITE" id="PS50975">
    <property type="entry name" value="ATP_GRASP"/>
    <property type="match status" value="1"/>
</dbReference>
<organism>
    <name type="scientific">Thermus thermophilus (strain ATCC 27634 / DSM 579 / HB8)</name>
    <dbReference type="NCBI Taxonomy" id="300852"/>
    <lineage>
        <taxon>Bacteria</taxon>
        <taxon>Thermotogati</taxon>
        <taxon>Deinococcota</taxon>
        <taxon>Deinococci</taxon>
        <taxon>Thermales</taxon>
        <taxon>Thermaceae</taxon>
        <taxon>Thermus</taxon>
    </lineage>
</organism>
<reference key="1">
    <citation type="journal article" date="2003" name="J. Mol. Biol.">
        <title>Crystal structure of a lysine biosynthesis enzyme, LysX, from Thermus thermophilus HB8.</title>
        <authorList>
            <person name="Sakai H."/>
            <person name="Vassylyeva M.N."/>
            <person name="Matsuura T."/>
            <person name="Sekine S."/>
            <person name="Gotoh K."/>
            <person name="Nishiyama M."/>
            <person name="Terada T."/>
            <person name="Shirouzu M."/>
            <person name="Kuramitsu S."/>
            <person name="Vassylyev D.G."/>
            <person name="Yokoyama S."/>
        </authorList>
    </citation>
    <scope>NUCLEOTIDE SEQUENCE [GENOMIC DNA]</scope>
    <scope>X-RAY CRYSTALLOGRAPHY (2.0 ANGSTROMS) IN COMPLEX WITH ADP</scope>
    <scope>SUBUNIT</scope>
    <source>
        <strain>ATCC 27634 / DSM 579 / HB8</strain>
    </source>
</reference>
<reference key="2">
    <citation type="submission" date="2004-11" db="EMBL/GenBank/DDBJ databases">
        <title>Complete genome sequence of Thermus thermophilus HB8.</title>
        <authorList>
            <person name="Masui R."/>
            <person name="Kurokawa K."/>
            <person name="Nakagawa N."/>
            <person name="Tokunaga F."/>
            <person name="Koyama Y."/>
            <person name="Shibata T."/>
            <person name="Oshima T."/>
            <person name="Yokoyama S."/>
            <person name="Yasunaga T."/>
            <person name="Kuramitsu S."/>
        </authorList>
    </citation>
    <scope>NUCLEOTIDE SEQUENCE [LARGE SCALE GENOMIC DNA]</scope>
    <source>
        <strain>ATCC 27634 / DSM 579 / HB8</strain>
    </source>
</reference>
<reference key="3">
    <citation type="journal article" date="2009" name="Nat. Chem. Biol.">
        <title>Discovery of proteinaceous N-modification in lysine biosynthesis of Thermus thermophilus.</title>
        <authorList>
            <person name="Horie A."/>
            <person name="Tomita T."/>
            <person name="Saiki A."/>
            <person name="Kono H."/>
            <person name="Taka H."/>
            <person name="Mineki R."/>
            <person name="Fujimura T."/>
            <person name="Nishiyama C."/>
            <person name="Kuzuyama T."/>
            <person name="Nishiyama M."/>
        </authorList>
    </citation>
    <scope>FUNCTION</scope>
    <scope>CATALYTIC ACTIVITY</scope>
    <scope>BIOPHYSICOCHEMICAL PROPERTIES</scope>
</reference>
<reference key="4">
    <citation type="journal article" date="2013" name="Nat. Chem. Biol.">
        <title>Lysine and arginine biosyntheses mediated by a common carrier protein in Sulfolobus.</title>
        <authorList>
            <person name="Ouchi T."/>
            <person name="Tomita T."/>
            <person name="Horie A."/>
            <person name="Yoshida A."/>
            <person name="Takahashi K."/>
            <person name="Nishida H."/>
            <person name="Lassak K."/>
            <person name="Taka H."/>
            <person name="Mineki R."/>
            <person name="Fujimura T."/>
            <person name="Kosono S."/>
            <person name="Nishiyama C."/>
            <person name="Masui R."/>
            <person name="Kuramitsu S."/>
            <person name="Albers S.V."/>
            <person name="Kuzuyama T."/>
            <person name="Nishiyama M."/>
        </authorList>
    </citation>
    <scope>X-RAY CRYSTALLOGRAPHY (1.95 ANGSTROMS) IN COMPLEX WITH ATP ANALOG</scope>
</reference>
<gene>
    <name type="primary">lysX</name>
    <name type="ordered locus">TTHA1907</name>
</gene>
<comment type="function">
    <text evidence="4">Catalyzes the ATP-dependent formation of a covalent bond between the amino group of alpha-aminoadipate (AAA) and the gamma-carboxyl group of the C-terminal glutamate residue in LysW.</text>
</comment>
<comment type="catalytic activity">
    <reaction evidence="4">
        <text>[amino-group carrier protein]-C-terminal-L-glutamate + L-2-aminoadipate + ATP = [amino-group carrier protein]-C-terminal-N-(1,4-dicarboxybutan-1-yl)-L-glutamine + ADP + phosphate + H(+)</text>
        <dbReference type="Rhea" id="RHEA:41940"/>
        <dbReference type="Rhea" id="RHEA-COMP:9693"/>
        <dbReference type="Rhea" id="RHEA-COMP:9694"/>
        <dbReference type="ChEBI" id="CHEBI:15378"/>
        <dbReference type="ChEBI" id="CHEBI:30616"/>
        <dbReference type="ChEBI" id="CHEBI:43474"/>
        <dbReference type="ChEBI" id="CHEBI:58672"/>
        <dbReference type="ChEBI" id="CHEBI:78503"/>
        <dbReference type="ChEBI" id="CHEBI:78525"/>
        <dbReference type="ChEBI" id="CHEBI:456216"/>
        <dbReference type="EC" id="6.3.2.43"/>
    </reaction>
</comment>
<comment type="cofactor">
    <cofactor evidence="1">
        <name>Mg(2+)</name>
        <dbReference type="ChEBI" id="CHEBI:18420"/>
    </cofactor>
    <text evidence="1">Binds 2 magnesium ions per subunit.</text>
</comment>
<comment type="biophysicochemical properties">
    <kinetics>
        <KM evidence="4">2.1 mM for alpha-aminoadipate</KM>
        <KM evidence="4">2.6 mM for ATP</KM>
    </kinetics>
</comment>
<comment type="pathway">
    <text>Amino-acid biosynthesis; L-lysine biosynthesis via AAA pathway; L-lysine from L-alpha-aminoadipate (Thermus route): step 1/5.</text>
</comment>
<comment type="subunit">
    <text evidence="3 5">Homodimer.</text>
</comment>
<comment type="similarity">
    <text evidence="6">Belongs to the RimK family. LysX subfamily.</text>
</comment>
<keyword id="KW-0002">3D-structure</keyword>
<keyword id="KW-0028">Amino-acid biosynthesis</keyword>
<keyword id="KW-0067">ATP-binding</keyword>
<keyword id="KW-0436">Ligase</keyword>
<keyword id="KW-0457">Lysine biosynthesis</keyword>
<keyword id="KW-0460">Magnesium</keyword>
<keyword id="KW-0479">Metal-binding</keyword>
<keyword id="KW-0547">Nucleotide-binding</keyword>
<keyword id="KW-1185">Reference proteome</keyword>
<name>LYSX_THET8</name>
<feature type="chain" id="PRO_0000391001" description="Alpha-aminoadipate--LysW ligase LysX">
    <location>
        <begin position="1"/>
        <end position="280"/>
    </location>
</feature>
<feature type="domain" description="ATP-grasp" evidence="2">
    <location>
        <begin position="93"/>
        <end position="276"/>
    </location>
</feature>
<feature type="short sequence motif" description="N-[TS] motif that is essential for LysX substrate specificity">
    <location>
        <begin position="258"/>
        <end position="259"/>
    </location>
</feature>
<feature type="binding site" evidence="1">
    <location>
        <position position="89"/>
    </location>
    <ligand>
        <name>ATP</name>
        <dbReference type="ChEBI" id="CHEBI:30616"/>
    </ligand>
</feature>
<feature type="binding site">
    <location>
        <position position="129"/>
    </location>
    <ligand>
        <name>ATP</name>
        <dbReference type="ChEBI" id="CHEBI:30616"/>
    </ligand>
</feature>
<feature type="binding site">
    <location>
        <begin position="133"/>
        <end position="139"/>
    </location>
    <ligand>
        <name>ATP</name>
        <dbReference type="ChEBI" id="CHEBI:30616"/>
    </ligand>
</feature>
<feature type="binding site">
    <location>
        <begin position="169"/>
        <end position="180"/>
    </location>
    <ligand>
        <name>ATP</name>
        <dbReference type="ChEBI" id="CHEBI:30616"/>
    </ligand>
</feature>
<feature type="binding site">
    <location>
        <position position="194"/>
    </location>
    <ligand>
        <name>ATP</name>
        <dbReference type="ChEBI" id="CHEBI:30616"/>
    </ligand>
</feature>
<feature type="binding site" evidence="1">
    <location>
        <position position="202"/>
    </location>
    <ligand>
        <name>ATP</name>
        <dbReference type="ChEBI" id="CHEBI:30616"/>
    </ligand>
</feature>
<feature type="binding site" evidence="1">
    <location>
        <position position="237"/>
    </location>
    <ligand>
        <name>Mg(2+)</name>
        <dbReference type="ChEBI" id="CHEBI:18420"/>
        <label>1</label>
    </ligand>
</feature>
<feature type="binding site" evidence="1">
    <location>
        <position position="249"/>
    </location>
    <ligand>
        <name>Mg(2+)</name>
        <dbReference type="ChEBI" id="CHEBI:18420"/>
        <label>1</label>
    </ligand>
</feature>
<feature type="binding site" evidence="1">
    <location>
        <position position="249"/>
    </location>
    <ligand>
        <name>Mg(2+)</name>
        <dbReference type="ChEBI" id="CHEBI:18420"/>
        <label>2</label>
    </ligand>
</feature>
<feature type="binding site" evidence="1">
    <location>
        <position position="251"/>
    </location>
    <ligand>
        <name>Mg(2+)</name>
        <dbReference type="ChEBI" id="CHEBI:18420"/>
        <label>2</label>
    </ligand>
</feature>
<feature type="strand" evidence="7">
    <location>
        <begin position="2"/>
        <end position="8"/>
    </location>
</feature>
<feature type="helix" evidence="7">
    <location>
        <begin position="11"/>
        <end position="22"/>
    </location>
</feature>
<feature type="strand" evidence="7">
    <location>
        <begin position="27"/>
        <end position="31"/>
    </location>
</feature>
<feature type="helix" evidence="7">
    <location>
        <begin position="32"/>
        <end position="34"/>
    </location>
</feature>
<feature type="helix" evidence="7">
    <location>
        <begin position="44"/>
        <end position="46"/>
    </location>
</feature>
<feature type="strand" evidence="7">
    <location>
        <begin position="51"/>
        <end position="54"/>
    </location>
</feature>
<feature type="helix" evidence="7">
    <location>
        <begin position="59"/>
        <end position="71"/>
    </location>
</feature>
<feature type="strand" evidence="7">
    <location>
        <begin position="76"/>
        <end position="78"/>
    </location>
</feature>
<feature type="helix" evidence="7">
    <location>
        <begin position="80"/>
        <end position="87"/>
    </location>
</feature>
<feature type="helix" evidence="7">
    <location>
        <begin position="89"/>
        <end position="99"/>
    </location>
</feature>
<feature type="strand" evidence="7">
    <location>
        <begin position="106"/>
        <end position="111"/>
    </location>
</feature>
<feature type="helix" evidence="7">
    <location>
        <begin position="112"/>
        <end position="122"/>
    </location>
</feature>
<feature type="strand" evidence="7">
    <location>
        <begin position="124"/>
        <end position="129"/>
    </location>
</feature>
<feature type="strand" evidence="7">
    <location>
        <begin position="140"/>
        <end position="142"/>
    </location>
</feature>
<feature type="helix" evidence="7">
    <location>
        <begin position="145"/>
        <end position="158"/>
    </location>
</feature>
<feature type="helix" evidence="7">
    <location>
        <begin position="161"/>
        <end position="164"/>
    </location>
</feature>
<feature type="strand" evidence="7">
    <location>
        <begin position="165"/>
        <end position="170"/>
    </location>
</feature>
<feature type="strand" evidence="7">
    <location>
        <begin position="175"/>
        <end position="184"/>
    </location>
</feature>
<feature type="strand" evidence="7">
    <location>
        <begin position="187"/>
        <end position="195"/>
    </location>
</feature>
<feature type="strand" evidence="7">
    <location>
        <begin position="197"/>
        <end position="200"/>
    </location>
</feature>
<feature type="helix" evidence="7">
    <location>
        <begin position="203"/>
        <end position="205"/>
    </location>
</feature>
<feature type="strand" evidence="7">
    <location>
        <begin position="208"/>
        <end position="211"/>
    </location>
</feature>
<feature type="helix" evidence="7">
    <location>
        <begin position="216"/>
        <end position="228"/>
    </location>
</feature>
<feature type="strand" evidence="7">
    <location>
        <begin position="232"/>
        <end position="241"/>
    </location>
</feature>
<feature type="strand" evidence="7">
    <location>
        <begin position="244"/>
        <end position="253"/>
    </location>
</feature>
<feature type="helix" evidence="7">
    <location>
        <begin position="259"/>
        <end position="263"/>
    </location>
</feature>
<feature type="helix" evidence="7">
    <location>
        <begin position="267"/>
        <end position="277"/>
    </location>
</feature>
<protein>
    <recommendedName>
        <fullName>Alpha-aminoadipate--LysW ligase LysX</fullName>
        <shortName>AAA--LysW ligase LysX</shortName>
        <ecNumber evidence="4">6.3.2.43</ecNumber>
    </recommendedName>
</protein>
<proteinExistence type="evidence at protein level"/>